<organism>
    <name type="scientific">Actinobacillus pleuropneumoniae serotype 7 (strain AP76)</name>
    <dbReference type="NCBI Taxonomy" id="537457"/>
    <lineage>
        <taxon>Bacteria</taxon>
        <taxon>Pseudomonadati</taxon>
        <taxon>Pseudomonadota</taxon>
        <taxon>Gammaproteobacteria</taxon>
        <taxon>Pasteurellales</taxon>
        <taxon>Pasteurellaceae</taxon>
        <taxon>Actinobacillus</taxon>
    </lineage>
</organism>
<gene>
    <name evidence="1" type="primary">ttcA</name>
    <name type="ordered locus">APP7_1031</name>
</gene>
<dbReference type="EC" id="2.8.1.-" evidence="1"/>
<dbReference type="EMBL" id="CP001091">
    <property type="protein sequence ID" value="ACE61683.1"/>
    <property type="molecule type" value="Genomic_DNA"/>
</dbReference>
<dbReference type="RefSeq" id="WP_005617454.1">
    <property type="nucleotide sequence ID" value="NC_010939.1"/>
</dbReference>
<dbReference type="SMR" id="B3GXW8"/>
<dbReference type="KEGG" id="apa:APP7_1031"/>
<dbReference type="HOGENOM" id="CLU_026481_0_0_6"/>
<dbReference type="Proteomes" id="UP000001226">
    <property type="component" value="Chromosome"/>
</dbReference>
<dbReference type="GO" id="GO:0005737">
    <property type="term" value="C:cytoplasm"/>
    <property type="evidence" value="ECO:0007669"/>
    <property type="project" value="UniProtKB-SubCell"/>
</dbReference>
<dbReference type="GO" id="GO:0051539">
    <property type="term" value="F:4 iron, 4 sulfur cluster binding"/>
    <property type="evidence" value="ECO:0007669"/>
    <property type="project" value="UniProtKB-UniRule"/>
</dbReference>
<dbReference type="GO" id="GO:0005524">
    <property type="term" value="F:ATP binding"/>
    <property type="evidence" value="ECO:0007669"/>
    <property type="project" value="UniProtKB-UniRule"/>
</dbReference>
<dbReference type="GO" id="GO:0000287">
    <property type="term" value="F:magnesium ion binding"/>
    <property type="evidence" value="ECO:0007669"/>
    <property type="project" value="UniProtKB-UniRule"/>
</dbReference>
<dbReference type="GO" id="GO:0016783">
    <property type="term" value="F:sulfurtransferase activity"/>
    <property type="evidence" value="ECO:0007669"/>
    <property type="project" value="UniProtKB-UniRule"/>
</dbReference>
<dbReference type="GO" id="GO:0000049">
    <property type="term" value="F:tRNA binding"/>
    <property type="evidence" value="ECO:0007669"/>
    <property type="project" value="UniProtKB-KW"/>
</dbReference>
<dbReference type="GO" id="GO:0034227">
    <property type="term" value="P:tRNA thio-modification"/>
    <property type="evidence" value="ECO:0007669"/>
    <property type="project" value="UniProtKB-UniRule"/>
</dbReference>
<dbReference type="CDD" id="cd24138">
    <property type="entry name" value="TtcA-like"/>
    <property type="match status" value="1"/>
</dbReference>
<dbReference type="Gene3D" id="3.40.50.620">
    <property type="entry name" value="HUPs"/>
    <property type="match status" value="1"/>
</dbReference>
<dbReference type="HAMAP" id="MF_01850">
    <property type="entry name" value="TtcA"/>
    <property type="match status" value="1"/>
</dbReference>
<dbReference type="InterPro" id="IPR014729">
    <property type="entry name" value="Rossmann-like_a/b/a_fold"/>
</dbReference>
<dbReference type="InterPro" id="IPR011063">
    <property type="entry name" value="TilS/TtcA_N"/>
</dbReference>
<dbReference type="InterPro" id="IPR012089">
    <property type="entry name" value="tRNA_Cyd_32_2_STrfase"/>
</dbReference>
<dbReference type="InterPro" id="IPR035107">
    <property type="entry name" value="tRNA_thiolation_TtcA_Ctu1"/>
</dbReference>
<dbReference type="NCBIfam" id="NF007972">
    <property type="entry name" value="PRK10696.1"/>
    <property type="match status" value="1"/>
</dbReference>
<dbReference type="PANTHER" id="PTHR43686:SF1">
    <property type="entry name" value="AMINOTRAN_5 DOMAIN-CONTAINING PROTEIN"/>
    <property type="match status" value="1"/>
</dbReference>
<dbReference type="PANTHER" id="PTHR43686">
    <property type="entry name" value="SULFURTRANSFERASE-RELATED"/>
    <property type="match status" value="1"/>
</dbReference>
<dbReference type="Pfam" id="PF01171">
    <property type="entry name" value="ATP_bind_3"/>
    <property type="match status" value="1"/>
</dbReference>
<dbReference type="PIRSF" id="PIRSF004976">
    <property type="entry name" value="ATPase_YdaO"/>
    <property type="match status" value="1"/>
</dbReference>
<dbReference type="SUPFAM" id="SSF52402">
    <property type="entry name" value="Adenine nucleotide alpha hydrolases-like"/>
    <property type="match status" value="1"/>
</dbReference>
<evidence type="ECO:0000255" key="1">
    <source>
        <dbReference type="HAMAP-Rule" id="MF_01850"/>
    </source>
</evidence>
<accession>B3GXW8</accession>
<feature type="chain" id="PRO_1000188623" description="tRNA-cytidine(32) 2-sulfurtransferase">
    <location>
        <begin position="1"/>
        <end position="318"/>
    </location>
</feature>
<feature type="short sequence motif" description="PP-loop motif" evidence="1">
    <location>
        <begin position="52"/>
        <end position="57"/>
    </location>
</feature>
<feature type="binding site" evidence="1">
    <location>
        <position position="127"/>
    </location>
    <ligand>
        <name>[4Fe-4S] cluster</name>
        <dbReference type="ChEBI" id="CHEBI:49883"/>
    </ligand>
</feature>
<feature type="binding site" evidence="1">
    <location>
        <position position="130"/>
    </location>
    <ligand>
        <name>[4Fe-4S] cluster</name>
        <dbReference type="ChEBI" id="CHEBI:49883"/>
    </ligand>
</feature>
<feature type="binding site" evidence="1">
    <location>
        <position position="218"/>
    </location>
    <ligand>
        <name>[4Fe-4S] cluster</name>
        <dbReference type="ChEBI" id="CHEBI:49883"/>
    </ligand>
</feature>
<sequence length="318" mass="36089">MNQDTQSANTQQEKKIAYNFNKLQKRLRRNVGNAIADFNMIEDGDKVMVCLSGGKDSYTLLDILLNLKLSAPIHFDIVAVNLDQKQPGFPEHTLPEYLESIGVEYKIVEENTYGIVKEKIPEGKTTCSLCSRLRRGILYRTATELGATKIALGHHRDDMLETLFLNMFYGGKLKSMPPKLISDDGKQIVIRPLAYCKEKDIEKYSQAKQFPIIPCNLCGSQPNLQRQVVKEMLQTWDRQYPGRIETMFSAMQNITLSHLCDPSLFDFKGLKLGQVLDGVEGDIAFDKAEIPNQPLIQDEDEQTTDYGENGMIQFKQVQ</sequence>
<name>TTCA_ACTP7</name>
<comment type="function">
    <text evidence="1">Catalyzes the ATP-dependent 2-thiolation of cytidine in position 32 of tRNA, to form 2-thiocytidine (s(2)C32). The sulfur atoms are provided by the cysteine/cysteine desulfurase (IscS) system.</text>
</comment>
<comment type="catalytic activity">
    <reaction evidence="1">
        <text>cytidine(32) in tRNA + S-sulfanyl-L-cysteinyl-[cysteine desulfurase] + AH2 + ATP = 2-thiocytidine(32) in tRNA + L-cysteinyl-[cysteine desulfurase] + A + AMP + diphosphate + H(+)</text>
        <dbReference type="Rhea" id="RHEA:57048"/>
        <dbReference type="Rhea" id="RHEA-COMP:10288"/>
        <dbReference type="Rhea" id="RHEA-COMP:12157"/>
        <dbReference type="Rhea" id="RHEA-COMP:12158"/>
        <dbReference type="Rhea" id="RHEA-COMP:14821"/>
        <dbReference type="ChEBI" id="CHEBI:13193"/>
        <dbReference type="ChEBI" id="CHEBI:15378"/>
        <dbReference type="ChEBI" id="CHEBI:17499"/>
        <dbReference type="ChEBI" id="CHEBI:29950"/>
        <dbReference type="ChEBI" id="CHEBI:30616"/>
        <dbReference type="ChEBI" id="CHEBI:33019"/>
        <dbReference type="ChEBI" id="CHEBI:61963"/>
        <dbReference type="ChEBI" id="CHEBI:82748"/>
        <dbReference type="ChEBI" id="CHEBI:141453"/>
        <dbReference type="ChEBI" id="CHEBI:456215"/>
    </reaction>
    <physiologicalReaction direction="left-to-right" evidence="1">
        <dbReference type="Rhea" id="RHEA:57049"/>
    </physiologicalReaction>
</comment>
<comment type="cofactor">
    <cofactor evidence="1">
        <name>Mg(2+)</name>
        <dbReference type="ChEBI" id="CHEBI:18420"/>
    </cofactor>
</comment>
<comment type="cofactor">
    <cofactor evidence="1">
        <name>[4Fe-4S] cluster</name>
        <dbReference type="ChEBI" id="CHEBI:49883"/>
    </cofactor>
    <text evidence="1">Binds 1 [4Fe-4S] cluster per subunit. The cluster is chelated by three Cys residues, the fourth Fe has a free coordination site that may bind a sulfur atom transferred from the persulfide of IscS.</text>
</comment>
<comment type="pathway">
    <text evidence="1">tRNA modification.</text>
</comment>
<comment type="subunit">
    <text evidence="1">Homodimer.</text>
</comment>
<comment type="subcellular location">
    <subcellularLocation>
        <location evidence="1">Cytoplasm</location>
    </subcellularLocation>
</comment>
<comment type="miscellaneous">
    <text evidence="1">The thiolation reaction likely consists of two steps: a first activation step by ATP to form an adenylated intermediate of the target base of tRNA, and a second nucleophilic substitution step of the sulfur (S) atom supplied by the hydrosulfide attached to the Fe-S cluster.</text>
</comment>
<comment type="similarity">
    <text evidence="1">Belongs to the TtcA family.</text>
</comment>
<proteinExistence type="inferred from homology"/>
<reference key="1">
    <citation type="submission" date="2008-06" db="EMBL/GenBank/DDBJ databases">
        <title>Genome and proteome analysis of A. pleuropneumoniae serotype 7.</title>
        <authorList>
            <person name="Linke B."/>
            <person name="Buettner F."/>
            <person name="Martinez-Arias R."/>
            <person name="Goesmann A."/>
            <person name="Baltes N."/>
            <person name="Tegetmeyer H."/>
            <person name="Singh M."/>
            <person name="Gerlach G.F."/>
        </authorList>
    </citation>
    <scope>NUCLEOTIDE SEQUENCE [LARGE SCALE GENOMIC DNA]</scope>
    <source>
        <strain>AP76</strain>
    </source>
</reference>
<keyword id="KW-0004">4Fe-4S</keyword>
<keyword id="KW-0067">ATP-binding</keyword>
<keyword id="KW-0963">Cytoplasm</keyword>
<keyword id="KW-0408">Iron</keyword>
<keyword id="KW-0411">Iron-sulfur</keyword>
<keyword id="KW-0460">Magnesium</keyword>
<keyword id="KW-0479">Metal-binding</keyword>
<keyword id="KW-0547">Nucleotide-binding</keyword>
<keyword id="KW-0694">RNA-binding</keyword>
<keyword id="KW-0808">Transferase</keyword>
<keyword id="KW-0819">tRNA processing</keyword>
<keyword id="KW-0820">tRNA-binding</keyword>
<protein>
    <recommendedName>
        <fullName evidence="1">tRNA-cytidine(32) 2-sulfurtransferase</fullName>
        <ecNumber evidence="1">2.8.1.-</ecNumber>
    </recommendedName>
    <alternativeName>
        <fullName evidence="1">Two-thiocytidine biosynthesis protein A</fullName>
    </alternativeName>
    <alternativeName>
        <fullName evidence="1">tRNA 2-thiocytidine biosynthesis protein TtcA</fullName>
    </alternativeName>
</protein>